<name>TRPD_CORGL</name>
<sequence length="348" mass="36633">MTSPATLKVLNAYLDNPTPTLEEAIEVFTPLTVGEYDDVHIAALLATIRTRGEQFADIAGAAKAFLAAARPFPITGAGLLDSAGTGGDGANTINITTGASLIAASGGVKLVKHGNRSVSSKSGSADVLEALNIPLGLDVDRAVKWFEASNFTFLFAPAYNPAIAHVQPVRQALKFPTIFNTLGPLLSPARPERQIMGVANANHGQLIAEVFRELGRTRALVVHGAGTDEIAVHGTTLVWELKEDGTIEHYTIEPEDLGLGRYTLEDLVGGLGTENAEAMRATFAGTGPDAHRDALAASAGAMFYLNGDVDSLKDGAQKALSLLADGTTQAWLAKHEEIDYSEKESSND</sequence>
<proteinExistence type="inferred from homology"/>
<reference key="1">
    <citation type="journal article" date="1986" name="Nucleic Acids Res.">
        <title>Complete nucleotide and deduced amino acid sequences of the Brevibacterium lactofermentum tryptophan operon.</title>
        <authorList>
            <person name="Matsui K."/>
            <person name="Sano K."/>
            <person name="Ohtsubo E."/>
        </authorList>
    </citation>
    <scope>NUCLEOTIDE SEQUENCE [GENOMIC DNA]</scope>
</reference>
<reference key="2">
    <citation type="thesis" date="1994" institute="University College Galway" country="Ireland">
        <authorList>
            <person name="O'Gara J.P."/>
        </authorList>
    </citation>
    <scope>NUCLEOTIDE SEQUENCE [GENOMIC DNA]</scope>
    <source>
        <strain>ATCC 21850</strain>
    </source>
</reference>
<reference key="3">
    <citation type="journal article" date="2003" name="Appl. Microbiol. Biotechnol.">
        <title>The Corynebacterium glutamicum genome: features and impacts on biotechnological processes.</title>
        <authorList>
            <person name="Ikeda M."/>
            <person name="Nakagawa S."/>
        </authorList>
    </citation>
    <scope>NUCLEOTIDE SEQUENCE [LARGE SCALE GENOMIC DNA]</scope>
    <source>
        <strain>ATCC 13032 / DSM 20300 / JCM 1318 / BCRC 11384 / CCUG 27702 / LMG 3730 / NBRC 12168 / NCIMB 10025 / NRRL B-2784 / 534</strain>
    </source>
</reference>
<reference key="4">
    <citation type="journal article" date="2003" name="J. Biotechnol.">
        <title>The complete Corynebacterium glutamicum ATCC 13032 genome sequence and its impact on the production of L-aspartate-derived amino acids and vitamins.</title>
        <authorList>
            <person name="Kalinowski J."/>
            <person name="Bathe B."/>
            <person name="Bartels D."/>
            <person name="Bischoff N."/>
            <person name="Bott M."/>
            <person name="Burkovski A."/>
            <person name="Dusch N."/>
            <person name="Eggeling L."/>
            <person name="Eikmanns B.J."/>
            <person name="Gaigalat L."/>
            <person name="Goesmann A."/>
            <person name="Hartmann M."/>
            <person name="Huthmacher K."/>
            <person name="Kraemer R."/>
            <person name="Linke B."/>
            <person name="McHardy A.C."/>
            <person name="Meyer F."/>
            <person name="Moeckel B."/>
            <person name="Pfefferle W."/>
            <person name="Puehler A."/>
            <person name="Rey D.A."/>
            <person name="Rueckert C."/>
            <person name="Rupp O."/>
            <person name="Sahm H."/>
            <person name="Wendisch V.F."/>
            <person name="Wiegraebe I."/>
            <person name="Tauch A."/>
        </authorList>
    </citation>
    <scope>NUCLEOTIDE SEQUENCE [LARGE SCALE GENOMIC DNA]</scope>
    <source>
        <strain>ATCC 13032 / DSM 20300 / JCM 1318 / BCRC 11384 / CCUG 27702 / LMG 3730 / NBRC 12168 / NCIMB 10025 / NRRL B-2784 / 534</strain>
    </source>
</reference>
<dbReference type="EC" id="2.4.2.18" evidence="1"/>
<dbReference type="EMBL" id="X04960">
    <property type="protein sequence ID" value="CAA28625.1"/>
    <property type="molecule type" value="Genomic_DNA"/>
</dbReference>
<dbReference type="EMBL" id="U11545">
    <property type="protein sequence ID" value="AAA19612.1"/>
    <property type="molecule type" value="Unassigned_DNA"/>
</dbReference>
<dbReference type="EMBL" id="BA000036">
    <property type="protein sequence ID" value="BAC00426.1"/>
    <property type="molecule type" value="Genomic_DNA"/>
</dbReference>
<dbReference type="EMBL" id="BX927157">
    <property type="protein sequence ID" value="CAF18972.1"/>
    <property type="molecule type" value="Genomic_DNA"/>
</dbReference>
<dbReference type="PIR" id="D24723">
    <property type="entry name" value="D24723"/>
</dbReference>
<dbReference type="RefSeq" id="NP_602225.1">
    <property type="nucleotide sequence ID" value="NC_003450.3"/>
</dbReference>
<dbReference type="RefSeq" id="WP_003855178.1">
    <property type="nucleotide sequence ID" value="NC_006958.1"/>
</dbReference>
<dbReference type="SMR" id="P06559"/>
<dbReference type="STRING" id="196627.cg3361"/>
<dbReference type="GeneID" id="1020974"/>
<dbReference type="KEGG" id="cgb:cg3361"/>
<dbReference type="KEGG" id="cgl:Cgl3032"/>
<dbReference type="PATRIC" id="fig|196627.13.peg.2966"/>
<dbReference type="eggNOG" id="COG0547">
    <property type="taxonomic scope" value="Bacteria"/>
</dbReference>
<dbReference type="HOGENOM" id="CLU_034315_2_1_11"/>
<dbReference type="OrthoDB" id="9806430at2"/>
<dbReference type="BioCyc" id="CORYNE:G18NG-12653-MONOMER"/>
<dbReference type="UniPathway" id="UPA00035">
    <property type="reaction ID" value="UER00041"/>
</dbReference>
<dbReference type="Proteomes" id="UP000000582">
    <property type="component" value="Chromosome"/>
</dbReference>
<dbReference type="Proteomes" id="UP000001009">
    <property type="component" value="Chromosome"/>
</dbReference>
<dbReference type="GO" id="GO:0005829">
    <property type="term" value="C:cytosol"/>
    <property type="evidence" value="ECO:0007669"/>
    <property type="project" value="TreeGrafter"/>
</dbReference>
<dbReference type="GO" id="GO:0004048">
    <property type="term" value="F:anthranilate phosphoribosyltransferase activity"/>
    <property type="evidence" value="ECO:0007669"/>
    <property type="project" value="UniProtKB-UniRule"/>
</dbReference>
<dbReference type="GO" id="GO:0000287">
    <property type="term" value="F:magnesium ion binding"/>
    <property type="evidence" value="ECO:0007669"/>
    <property type="project" value="UniProtKB-UniRule"/>
</dbReference>
<dbReference type="GO" id="GO:0000162">
    <property type="term" value="P:L-tryptophan biosynthetic process"/>
    <property type="evidence" value="ECO:0007669"/>
    <property type="project" value="UniProtKB-UniRule"/>
</dbReference>
<dbReference type="FunFam" id="3.40.1030.10:FF:000002">
    <property type="entry name" value="Anthranilate phosphoribosyltransferase"/>
    <property type="match status" value="1"/>
</dbReference>
<dbReference type="Gene3D" id="3.40.1030.10">
    <property type="entry name" value="Nucleoside phosphorylase/phosphoribosyltransferase catalytic domain"/>
    <property type="match status" value="1"/>
</dbReference>
<dbReference type="Gene3D" id="1.20.970.10">
    <property type="entry name" value="Transferase, Pyrimidine Nucleoside Phosphorylase, Chain C"/>
    <property type="match status" value="1"/>
</dbReference>
<dbReference type="HAMAP" id="MF_00211">
    <property type="entry name" value="TrpD"/>
    <property type="match status" value="1"/>
</dbReference>
<dbReference type="InterPro" id="IPR005940">
    <property type="entry name" value="Anthranilate_Pribosyl_Tfrase"/>
</dbReference>
<dbReference type="InterPro" id="IPR000312">
    <property type="entry name" value="Glycosyl_Trfase_fam3"/>
</dbReference>
<dbReference type="InterPro" id="IPR017459">
    <property type="entry name" value="Glycosyl_Trfase_fam3_N_dom"/>
</dbReference>
<dbReference type="InterPro" id="IPR036320">
    <property type="entry name" value="Glycosyl_Trfase_fam3_N_dom_sf"/>
</dbReference>
<dbReference type="InterPro" id="IPR035902">
    <property type="entry name" value="Nuc_phospho_transferase"/>
</dbReference>
<dbReference type="NCBIfam" id="TIGR01245">
    <property type="entry name" value="trpD"/>
    <property type="match status" value="1"/>
</dbReference>
<dbReference type="PANTHER" id="PTHR43285">
    <property type="entry name" value="ANTHRANILATE PHOSPHORIBOSYLTRANSFERASE"/>
    <property type="match status" value="1"/>
</dbReference>
<dbReference type="PANTHER" id="PTHR43285:SF2">
    <property type="entry name" value="ANTHRANILATE PHOSPHORIBOSYLTRANSFERASE"/>
    <property type="match status" value="1"/>
</dbReference>
<dbReference type="Pfam" id="PF02885">
    <property type="entry name" value="Glycos_trans_3N"/>
    <property type="match status" value="1"/>
</dbReference>
<dbReference type="Pfam" id="PF00591">
    <property type="entry name" value="Glycos_transf_3"/>
    <property type="match status" value="1"/>
</dbReference>
<dbReference type="SUPFAM" id="SSF52418">
    <property type="entry name" value="Nucleoside phosphorylase/phosphoribosyltransferase catalytic domain"/>
    <property type="match status" value="1"/>
</dbReference>
<dbReference type="SUPFAM" id="SSF47648">
    <property type="entry name" value="Nucleoside phosphorylase/phosphoribosyltransferase N-terminal domain"/>
    <property type="match status" value="1"/>
</dbReference>
<feature type="chain" id="PRO_0000154445" description="Anthranilate phosphoribosyltransferase">
    <location>
        <begin position="1"/>
        <end position="348"/>
    </location>
</feature>
<feature type="binding site" evidence="1">
    <location>
        <position position="84"/>
    </location>
    <ligand>
        <name>5-phospho-alpha-D-ribose 1-diphosphate</name>
        <dbReference type="ChEBI" id="CHEBI:58017"/>
    </ligand>
</feature>
<feature type="binding site" evidence="1">
    <location>
        <position position="84"/>
    </location>
    <ligand>
        <name>anthranilate</name>
        <dbReference type="ChEBI" id="CHEBI:16567"/>
        <label>1</label>
    </ligand>
</feature>
<feature type="binding site" evidence="1">
    <location>
        <begin position="87"/>
        <end position="88"/>
    </location>
    <ligand>
        <name>5-phospho-alpha-D-ribose 1-diphosphate</name>
        <dbReference type="ChEBI" id="CHEBI:58017"/>
    </ligand>
</feature>
<feature type="binding site" evidence="1">
    <location>
        <position position="92"/>
    </location>
    <ligand>
        <name>5-phospho-alpha-D-ribose 1-diphosphate</name>
        <dbReference type="ChEBI" id="CHEBI:58017"/>
    </ligand>
</feature>
<feature type="binding site" evidence="1">
    <location>
        <begin position="94"/>
        <end position="97"/>
    </location>
    <ligand>
        <name>5-phospho-alpha-D-ribose 1-diphosphate</name>
        <dbReference type="ChEBI" id="CHEBI:58017"/>
    </ligand>
</feature>
<feature type="binding site" evidence="1">
    <location>
        <position position="96"/>
    </location>
    <ligand>
        <name>Mg(2+)</name>
        <dbReference type="ChEBI" id="CHEBI:18420"/>
        <label>1</label>
    </ligand>
</feature>
<feature type="binding site" evidence="1">
    <location>
        <begin position="112"/>
        <end position="120"/>
    </location>
    <ligand>
        <name>5-phospho-alpha-D-ribose 1-diphosphate</name>
        <dbReference type="ChEBI" id="CHEBI:58017"/>
    </ligand>
</feature>
<feature type="binding site" evidence="1">
    <location>
        <position position="115"/>
    </location>
    <ligand>
        <name>anthranilate</name>
        <dbReference type="ChEBI" id="CHEBI:16567"/>
        <label>1</label>
    </ligand>
</feature>
<feature type="binding site" evidence="1">
    <location>
        <position position="124"/>
    </location>
    <ligand>
        <name>5-phospho-alpha-D-ribose 1-diphosphate</name>
        <dbReference type="ChEBI" id="CHEBI:58017"/>
    </ligand>
</feature>
<feature type="binding site" evidence="1">
    <location>
        <position position="170"/>
    </location>
    <ligand>
        <name>anthranilate</name>
        <dbReference type="ChEBI" id="CHEBI:16567"/>
        <label>2</label>
    </ligand>
</feature>
<feature type="binding site" evidence="1">
    <location>
        <position position="228"/>
    </location>
    <ligand>
        <name>Mg(2+)</name>
        <dbReference type="ChEBI" id="CHEBI:18420"/>
        <label>2</label>
    </ligand>
</feature>
<feature type="binding site" evidence="1">
    <location>
        <position position="229"/>
    </location>
    <ligand>
        <name>Mg(2+)</name>
        <dbReference type="ChEBI" id="CHEBI:18420"/>
        <label>1</label>
    </ligand>
</feature>
<feature type="binding site" evidence="1">
    <location>
        <position position="229"/>
    </location>
    <ligand>
        <name>Mg(2+)</name>
        <dbReference type="ChEBI" id="CHEBI:18420"/>
        <label>2</label>
    </ligand>
</feature>
<feature type="sequence conflict" description="In Ref. 1; CAA28625." evidence="2" ref="1">
    <original>V</original>
    <variation>A</variation>
    <location>
        <position position="111"/>
    </location>
</feature>
<feature type="sequence conflict" description="In Ref. 2; AAA19612." evidence="2" ref="2">
    <original>S</original>
    <variation>F</variation>
    <location>
        <position position="149"/>
    </location>
</feature>
<feature type="sequence conflict" description="In Ref. 1; CAA28625." evidence="2" ref="1">
    <original>A</original>
    <variation>T</variation>
    <location>
        <position position="156"/>
    </location>
</feature>
<feature type="sequence conflict" description="In Ref. 2; AAA19612." evidence="2" ref="2">
    <original>A</original>
    <variation>E</variation>
    <location>
        <position position="162"/>
    </location>
</feature>
<feature type="sequence conflict" description="In Ref. 1; CAA28625." evidence="2" ref="1">
    <original>G</original>
    <variation>A</variation>
    <location>
        <position position="326"/>
    </location>
</feature>
<comment type="function">
    <text evidence="1">Catalyzes the transfer of the phosphoribosyl group of 5-phosphorylribose-1-pyrophosphate (PRPP) to anthranilate to yield N-(5'-phosphoribosyl)-anthranilate (PRA).</text>
</comment>
<comment type="catalytic activity">
    <reaction evidence="1">
        <text>N-(5-phospho-beta-D-ribosyl)anthranilate + diphosphate = 5-phospho-alpha-D-ribose 1-diphosphate + anthranilate</text>
        <dbReference type="Rhea" id="RHEA:11768"/>
        <dbReference type="ChEBI" id="CHEBI:16567"/>
        <dbReference type="ChEBI" id="CHEBI:18277"/>
        <dbReference type="ChEBI" id="CHEBI:33019"/>
        <dbReference type="ChEBI" id="CHEBI:58017"/>
        <dbReference type="EC" id="2.4.2.18"/>
    </reaction>
</comment>
<comment type="cofactor">
    <cofactor evidence="1">
        <name>Mg(2+)</name>
        <dbReference type="ChEBI" id="CHEBI:18420"/>
    </cofactor>
    <text evidence="1">Binds 2 magnesium ions per monomer.</text>
</comment>
<comment type="pathway">
    <text evidence="1">Amino-acid biosynthesis; L-tryptophan biosynthesis; L-tryptophan from chorismate: step 2/5.</text>
</comment>
<comment type="subunit">
    <text evidence="1">Homodimer.</text>
</comment>
<comment type="similarity">
    <text evidence="1">Belongs to the anthranilate phosphoribosyltransferase family.</text>
</comment>
<keyword id="KW-0028">Amino-acid biosynthesis</keyword>
<keyword id="KW-0057">Aromatic amino acid biosynthesis</keyword>
<keyword id="KW-0328">Glycosyltransferase</keyword>
<keyword id="KW-0460">Magnesium</keyword>
<keyword id="KW-0479">Metal-binding</keyword>
<keyword id="KW-1185">Reference proteome</keyword>
<keyword id="KW-0808">Transferase</keyword>
<keyword id="KW-0822">Tryptophan biosynthesis</keyword>
<evidence type="ECO:0000255" key="1">
    <source>
        <dbReference type="HAMAP-Rule" id="MF_00211"/>
    </source>
</evidence>
<evidence type="ECO:0000305" key="2"/>
<gene>
    <name evidence="1" type="primary">trpD</name>
    <name type="ordered locus">Cgl3032</name>
    <name type="ordered locus">cg3361</name>
</gene>
<accession>P06559</accession>
<accession>P42483</accession>
<organism>
    <name type="scientific">Corynebacterium glutamicum (strain ATCC 13032 / DSM 20300 / JCM 1318 / BCRC 11384 / CCUG 27702 / LMG 3730 / NBRC 12168 / NCIMB 10025 / NRRL B-2784 / 534)</name>
    <dbReference type="NCBI Taxonomy" id="196627"/>
    <lineage>
        <taxon>Bacteria</taxon>
        <taxon>Bacillati</taxon>
        <taxon>Actinomycetota</taxon>
        <taxon>Actinomycetes</taxon>
        <taxon>Mycobacteriales</taxon>
        <taxon>Corynebacteriaceae</taxon>
        <taxon>Corynebacterium</taxon>
    </lineage>
</organism>
<protein>
    <recommendedName>
        <fullName evidence="1">Anthranilate phosphoribosyltransferase</fullName>
        <ecNumber evidence="1">2.4.2.18</ecNumber>
    </recommendedName>
</protein>